<sequence length="248" mass="28695">MVKQIRRYALFQATPDSEFVKEMYGGYFNVFVSAFGDEGEQWDLFRVIDGEFPRDEDLEKYEGFVISGSLHDAFTEEDWIIELCSVCKKLDVMKKKILGICFGHQIICRVRGGKVGRARKGPDIGLGNITIVQDVIKPGDYFDQIESLSIIQCHRDEVLEPPESARVIGFSDKCDVEIFSVEDHLLCFQGHPEYNKEILLEIIDRVHKIKFVEEEILEKAKDSIKKFEPDTQRLHMLCKNFLKGRRTH</sequence>
<protein>
    <recommendedName>
        <fullName evidence="3">Gamma-glutamyl peptidase 2</fullName>
        <ecNumber evidence="1">3.4.19.16</ecNumber>
    </recommendedName>
</protein>
<keyword id="KW-0963">Cytoplasm</keyword>
<keyword id="KW-0378">Hydrolase</keyword>
<keyword id="KW-0645">Protease</keyword>
<keyword id="KW-1185">Reference proteome</keyword>
<proteinExistence type="evidence at transcript level"/>
<organism>
    <name type="scientific">Arabidopsis thaliana</name>
    <name type="common">Mouse-ear cress</name>
    <dbReference type="NCBI Taxonomy" id="3702"/>
    <lineage>
        <taxon>Eukaryota</taxon>
        <taxon>Viridiplantae</taxon>
        <taxon>Streptophyta</taxon>
        <taxon>Embryophyta</taxon>
        <taxon>Tracheophyta</taxon>
        <taxon>Spermatophyta</taxon>
        <taxon>Magnoliopsida</taxon>
        <taxon>eudicotyledons</taxon>
        <taxon>Gunneridae</taxon>
        <taxon>Pentapetalae</taxon>
        <taxon>rosids</taxon>
        <taxon>malvids</taxon>
        <taxon>Brassicales</taxon>
        <taxon>Brassicaceae</taxon>
        <taxon>Camelineae</taxon>
        <taxon>Arabidopsis</taxon>
    </lineage>
</organism>
<comment type="function">
    <text evidence="1">Involved in glucosinolate biosynthesis. Hydrolyzes the gamma-glutamyl peptide bond of several glutathione (GSH) conjugates to produce Cys-Gly conjugates related to glucosinolates. The gamma-Glu-Cys-Gly-GSH conjugates are the sulfur-donating molecule in glucosinolate biosynthesis.</text>
</comment>
<comment type="catalytic activity">
    <reaction evidence="1">
        <text>an S-[(1E)-1-(hydroxyimino)-omega-(methylsulfanyl)alkyl]-L-glutathione + H2O = an S-[(1E)-1-(hydroxyimino)-omega-(methylsulfanyl)alkyl]-L-cysteinylglycine + L-glutamate</text>
        <dbReference type="Rhea" id="RHEA:52756"/>
        <dbReference type="Rhea" id="RHEA-COMP:13138"/>
        <dbReference type="Rhea" id="RHEA-COMP:13355"/>
        <dbReference type="ChEBI" id="CHEBI:15377"/>
        <dbReference type="ChEBI" id="CHEBI:29985"/>
        <dbReference type="ChEBI" id="CHEBI:136061"/>
        <dbReference type="ChEBI" id="CHEBI:136825"/>
        <dbReference type="EC" id="3.4.19.16"/>
    </reaction>
</comment>
<comment type="catalytic activity">
    <reaction evidence="1">
        <text>(E)-1-(glutathione-S-yl)-2-(1H-indol-3-yl)acetohydroximate + H2O = (E)-1-(glycyl-L-cystein-S-yl)-2-(1H-indol-3-yl)acetohydroximate + L-glutamate</text>
        <dbReference type="Rhea" id="RHEA:52764"/>
        <dbReference type="ChEBI" id="CHEBI:15377"/>
        <dbReference type="ChEBI" id="CHEBI:29985"/>
        <dbReference type="ChEBI" id="CHEBI:136444"/>
        <dbReference type="ChEBI" id="CHEBI:136831"/>
        <dbReference type="EC" id="3.4.19.16"/>
    </reaction>
</comment>
<comment type="catalytic activity">
    <reaction evidence="1">
        <text>2-(glutathion-S-yl)-2-(1H-indol-3-yl)acetonitrile + H2O = 2-(glycyl-L-cystein-S-yl)-2-(1H-indol-3-yl)acetonitrile + L-glutamate</text>
        <dbReference type="Rhea" id="RHEA:52768"/>
        <dbReference type="ChEBI" id="CHEBI:15377"/>
        <dbReference type="ChEBI" id="CHEBI:29985"/>
        <dbReference type="ChEBI" id="CHEBI:64981"/>
        <dbReference type="ChEBI" id="CHEBI:136832"/>
        <dbReference type="EC" id="3.4.19.16"/>
    </reaction>
</comment>
<comment type="catalytic activity">
    <reaction evidence="1">
        <text>(Z)-1-(glutathione-S-yl)-2-phenylacetohydroximate + H2O = (Z)-1-(glycyl-L-cystein-S-yl)-2-phenylacetohydroximate + L-glutamate</text>
        <dbReference type="Rhea" id="RHEA:52760"/>
        <dbReference type="ChEBI" id="CHEBI:15377"/>
        <dbReference type="ChEBI" id="CHEBI:29985"/>
        <dbReference type="ChEBI" id="CHEBI:136447"/>
        <dbReference type="ChEBI" id="CHEBI:136830"/>
        <dbReference type="EC" id="3.4.19.16"/>
    </reaction>
</comment>
<comment type="pathway">
    <text evidence="3">Secondary metabolite biosynthesis.</text>
</comment>
<comment type="subcellular location">
    <subcellularLocation>
        <location evidence="1">Cytoplasm</location>
        <location evidence="1">Cytosol</location>
    </subcellularLocation>
</comment>
<comment type="similarity">
    <text evidence="3">Belongs to the peptidase C26 family.</text>
</comment>
<evidence type="ECO:0000250" key="1">
    <source>
        <dbReference type="UniProtKB" id="Q9M0A7"/>
    </source>
</evidence>
<evidence type="ECO:0000255" key="2">
    <source>
        <dbReference type="PROSITE-ProRule" id="PRU00605"/>
    </source>
</evidence>
<evidence type="ECO:0000305" key="3"/>
<evidence type="ECO:0000312" key="4">
    <source>
        <dbReference type="Araport" id="AT4G30540"/>
    </source>
</evidence>
<name>GGP2_ARATH</name>
<feature type="chain" id="PRO_0000435501" description="Gamma-glutamyl peptidase 2">
    <location>
        <begin position="1"/>
        <end position="248"/>
    </location>
</feature>
<feature type="domain" description="Glutamine amidotransferase type-1" evidence="2">
    <location>
        <begin position="17"/>
        <end position="212"/>
    </location>
</feature>
<feature type="active site" description="Nucleophile" evidence="2">
    <location>
        <position position="101"/>
    </location>
</feature>
<feature type="active site" evidence="2">
    <location>
        <position position="191"/>
    </location>
</feature>
<feature type="active site" evidence="2">
    <location>
        <position position="193"/>
    </location>
</feature>
<accession>Q9M0A6</accession>
<reference key="1">
    <citation type="journal article" date="1999" name="Nature">
        <title>Sequence and analysis of chromosome 4 of the plant Arabidopsis thaliana.</title>
        <authorList>
            <person name="Mayer K.F.X."/>
            <person name="Schueller C."/>
            <person name="Wambutt R."/>
            <person name="Murphy G."/>
            <person name="Volckaert G."/>
            <person name="Pohl T."/>
            <person name="Duesterhoeft A."/>
            <person name="Stiekema W."/>
            <person name="Entian K.-D."/>
            <person name="Terryn N."/>
            <person name="Harris B."/>
            <person name="Ansorge W."/>
            <person name="Brandt P."/>
            <person name="Grivell L.A."/>
            <person name="Rieger M."/>
            <person name="Weichselgartner M."/>
            <person name="de Simone V."/>
            <person name="Obermaier B."/>
            <person name="Mache R."/>
            <person name="Mueller M."/>
            <person name="Kreis M."/>
            <person name="Delseny M."/>
            <person name="Puigdomenech P."/>
            <person name="Watson M."/>
            <person name="Schmidtheini T."/>
            <person name="Reichert B."/>
            <person name="Portetelle D."/>
            <person name="Perez-Alonso M."/>
            <person name="Boutry M."/>
            <person name="Bancroft I."/>
            <person name="Vos P."/>
            <person name="Hoheisel J."/>
            <person name="Zimmermann W."/>
            <person name="Wedler H."/>
            <person name="Ridley P."/>
            <person name="Langham S.-A."/>
            <person name="McCullagh B."/>
            <person name="Bilham L."/>
            <person name="Robben J."/>
            <person name="van der Schueren J."/>
            <person name="Grymonprez B."/>
            <person name="Chuang Y.-J."/>
            <person name="Vandenbussche F."/>
            <person name="Braeken M."/>
            <person name="Weltjens I."/>
            <person name="Voet M."/>
            <person name="Bastiaens I."/>
            <person name="Aert R."/>
            <person name="Defoor E."/>
            <person name="Weitzenegger T."/>
            <person name="Bothe G."/>
            <person name="Ramsperger U."/>
            <person name="Hilbert H."/>
            <person name="Braun M."/>
            <person name="Holzer E."/>
            <person name="Brandt A."/>
            <person name="Peters S."/>
            <person name="van Staveren M."/>
            <person name="Dirkse W."/>
            <person name="Mooijman P."/>
            <person name="Klein Lankhorst R."/>
            <person name="Rose M."/>
            <person name="Hauf J."/>
            <person name="Koetter P."/>
            <person name="Berneiser S."/>
            <person name="Hempel S."/>
            <person name="Feldpausch M."/>
            <person name="Lamberth S."/>
            <person name="Van den Daele H."/>
            <person name="De Keyser A."/>
            <person name="Buysshaert C."/>
            <person name="Gielen J."/>
            <person name="Villarroel R."/>
            <person name="De Clercq R."/>
            <person name="van Montagu M."/>
            <person name="Rogers J."/>
            <person name="Cronin A."/>
            <person name="Quail M.A."/>
            <person name="Bray-Allen S."/>
            <person name="Clark L."/>
            <person name="Doggett J."/>
            <person name="Hall S."/>
            <person name="Kay M."/>
            <person name="Lennard N."/>
            <person name="McLay K."/>
            <person name="Mayes R."/>
            <person name="Pettett A."/>
            <person name="Rajandream M.A."/>
            <person name="Lyne M."/>
            <person name="Benes V."/>
            <person name="Rechmann S."/>
            <person name="Borkova D."/>
            <person name="Bloecker H."/>
            <person name="Scharfe M."/>
            <person name="Grimm M."/>
            <person name="Loehnert T.-H."/>
            <person name="Dose S."/>
            <person name="de Haan M."/>
            <person name="Maarse A.C."/>
            <person name="Schaefer M."/>
            <person name="Mueller-Auer S."/>
            <person name="Gabel C."/>
            <person name="Fuchs M."/>
            <person name="Fartmann B."/>
            <person name="Granderath K."/>
            <person name="Dauner D."/>
            <person name="Herzl A."/>
            <person name="Neumann S."/>
            <person name="Argiriou A."/>
            <person name="Vitale D."/>
            <person name="Liguori R."/>
            <person name="Piravandi E."/>
            <person name="Massenet O."/>
            <person name="Quigley F."/>
            <person name="Clabauld G."/>
            <person name="Muendlein A."/>
            <person name="Felber R."/>
            <person name="Schnabl S."/>
            <person name="Hiller R."/>
            <person name="Schmidt W."/>
            <person name="Lecharny A."/>
            <person name="Aubourg S."/>
            <person name="Chefdor F."/>
            <person name="Cooke R."/>
            <person name="Berger C."/>
            <person name="Monfort A."/>
            <person name="Casacuberta E."/>
            <person name="Gibbons T."/>
            <person name="Weber N."/>
            <person name="Vandenbol M."/>
            <person name="Bargues M."/>
            <person name="Terol J."/>
            <person name="Torres A."/>
            <person name="Perez-Perez A."/>
            <person name="Purnelle B."/>
            <person name="Bent E."/>
            <person name="Johnson S."/>
            <person name="Tacon D."/>
            <person name="Jesse T."/>
            <person name="Heijnen L."/>
            <person name="Schwarz S."/>
            <person name="Scholler P."/>
            <person name="Heber S."/>
            <person name="Francs P."/>
            <person name="Bielke C."/>
            <person name="Frishman D."/>
            <person name="Haase D."/>
            <person name="Lemcke K."/>
            <person name="Mewes H.-W."/>
            <person name="Stocker S."/>
            <person name="Zaccaria P."/>
            <person name="Bevan M."/>
            <person name="Wilson R.K."/>
            <person name="de la Bastide M."/>
            <person name="Habermann K."/>
            <person name="Parnell L."/>
            <person name="Dedhia N."/>
            <person name="Gnoj L."/>
            <person name="Schutz K."/>
            <person name="Huang E."/>
            <person name="Spiegel L."/>
            <person name="Sekhon M."/>
            <person name="Murray J."/>
            <person name="Sheet P."/>
            <person name="Cordes M."/>
            <person name="Abu-Threideh J."/>
            <person name="Stoneking T."/>
            <person name="Kalicki J."/>
            <person name="Graves T."/>
            <person name="Harmon G."/>
            <person name="Edwards J."/>
            <person name="Latreille P."/>
            <person name="Courtney L."/>
            <person name="Cloud J."/>
            <person name="Abbott A."/>
            <person name="Scott K."/>
            <person name="Johnson D."/>
            <person name="Minx P."/>
            <person name="Bentley D."/>
            <person name="Fulton B."/>
            <person name="Miller N."/>
            <person name="Greco T."/>
            <person name="Kemp K."/>
            <person name="Kramer J."/>
            <person name="Fulton L."/>
            <person name="Mardis E."/>
            <person name="Dante M."/>
            <person name="Pepin K."/>
            <person name="Hillier L.W."/>
            <person name="Nelson J."/>
            <person name="Spieth J."/>
            <person name="Ryan E."/>
            <person name="Andrews S."/>
            <person name="Geisel C."/>
            <person name="Layman D."/>
            <person name="Du H."/>
            <person name="Ali J."/>
            <person name="Berghoff A."/>
            <person name="Jones K."/>
            <person name="Drone K."/>
            <person name="Cotton M."/>
            <person name="Joshu C."/>
            <person name="Antonoiu B."/>
            <person name="Zidanic M."/>
            <person name="Strong C."/>
            <person name="Sun H."/>
            <person name="Lamar B."/>
            <person name="Yordan C."/>
            <person name="Ma P."/>
            <person name="Zhong J."/>
            <person name="Preston R."/>
            <person name="Vil D."/>
            <person name="Shekher M."/>
            <person name="Matero A."/>
            <person name="Shah R."/>
            <person name="Swaby I.K."/>
            <person name="O'Shaughnessy A."/>
            <person name="Rodriguez M."/>
            <person name="Hoffman J."/>
            <person name="Till S."/>
            <person name="Granat S."/>
            <person name="Shohdy N."/>
            <person name="Hasegawa A."/>
            <person name="Hameed A."/>
            <person name="Lodhi M."/>
            <person name="Johnson A."/>
            <person name="Chen E."/>
            <person name="Marra M.A."/>
            <person name="Martienssen R."/>
            <person name="McCombie W.R."/>
        </authorList>
    </citation>
    <scope>NUCLEOTIDE SEQUENCE [LARGE SCALE GENOMIC DNA]</scope>
    <source>
        <strain>cv. Columbia</strain>
    </source>
</reference>
<reference key="2">
    <citation type="journal article" date="2017" name="Plant J.">
        <title>Araport11: a complete reannotation of the Arabidopsis thaliana reference genome.</title>
        <authorList>
            <person name="Cheng C.Y."/>
            <person name="Krishnakumar V."/>
            <person name="Chan A.P."/>
            <person name="Thibaud-Nissen F."/>
            <person name="Schobel S."/>
            <person name="Town C.D."/>
        </authorList>
    </citation>
    <scope>GENOME REANNOTATION</scope>
    <source>
        <strain>cv. Columbia</strain>
    </source>
</reference>
<reference key="3">
    <citation type="journal article" date="2003" name="Science">
        <title>Empirical analysis of transcriptional activity in the Arabidopsis genome.</title>
        <authorList>
            <person name="Yamada K."/>
            <person name="Lim J."/>
            <person name="Dale J.M."/>
            <person name="Chen H."/>
            <person name="Shinn P."/>
            <person name="Palm C.J."/>
            <person name="Southwick A.M."/>
            <person name="Wu H.C."/>
            <person name="Kim C.J."/>
            <person name="Nguyen M."/>
            <person name="Pham P.K."/>
            <person name="Cheuk R.F."/>
            <person name="Karlin-Newmann G."/>
            <person name="Liu S.X."/>
            <person name="Lam B."/>
            <person name="Sakano H."/>
            <person name="Wu T."/>
            <person name="Yu G."/>
            <person name="Miranda M."/>
            <person name="Quach H.L."/>
            <person name="Tripp M."/>
            <person name="Chang C.H."/>
            <person name="Lee J.M."/>
            <person name="Toriumi M.J."/>
            <person name="Chan M.M."/>
            <person name="Tang C.C."/>
            <person name="Onodera C.S."/>
            <person name="Deng J.M."/>
            <person name="Akiyama K."/>
            <person name="Ansari Y."/>
            <person name="Arakawa T."/>
            <person name="Banh J."/>
            <person name="Banno F."/>
            <person name="Bowser L."/>
            <person name="Brooks S.Y."/>
            <person name="Carninci P."/>
            <person name="Chao Q."/>
            <person name="Choy N."/>
            <person name="Enju A."/>
            <person name="Goldsmith A.D."/>
            <person name="Gurjal M."/>
            <person name="Hansen N.F."/>
            <person name="Hayashizaki Y."/>
            <person name="Johnson-Hopson C."/>
            <person name="Hsuan V.W."/>
            <person name="Iida K."/>
            <person name="Karnes M."/>
            <person name="Khan S."/>
            <person name="Koesema E."/>
            <person name="Ishida J."/>
            <person name="Jiang P.X."/>
            <person name="Jones T."/>
            <person name="Kawai J."/>
            <person name="Kamiya A."/>
            <person name="Meyers C."/>
            <person name="Nakajima M."/>
            <person name="Narusaka M."/>
            <person name="Seki M."/>
            <person name="Sakurai T."/>
            <person name="Satou M."/>
            <person name="Tamse R."/>
            <person name="Vaysberg M."/>
            <person name="Wallender E.K."/>
            <person name="Wong C."/>
            <person name="Yamamura Y."/>
            <person name="Yuan S."/>
            <person name="Shinozaki K."/>
            <person name="Davis R.W."/>
            <person name="Theologis A."/>
            <person name="Ecker J.R."/>
        </authorList>
    </citation>
    <scope>NUCLEOTIDE SEQUENCE [LARGE SCALE MRNA]</scope>
    <source>
        <strain>cv. Columbia</strain>
    </source>
</reference>
<dbReference type="EC" id="3.4.19.16" evidence="1"/>
<dbReference type="EMBL" id="AL161577">
    <property type="protein sequence ID" value="CAB79772.1"/>
    <property type="molecule type" value="Genomic_DNA"/>
</dbReference>
<dbReference type="EMBL" id="CP002687">
    <property type="protein sequence ID" value="AEE85778.1"/>
    <property type="molecule type" value="Genomic_DNA"/>
</dbReference>
<dbReference type="EMBL" id="AY142516">
    <property type="protein sequence ID" value="AAN13059.1"/>
    <property type="molecule type" value="mRNA"/>
</dbReference>
<dbReference type="PIR" id="C85357">
    <property type="entry name" value="C85357"/>
</dbReference>
<dbReference type="RefSeq" id="NP_194783.1">
    <property type="nucleotide sequence ID" value="NM_119200.3"/>
</dbReference>
<dbReference type="SMR" id="Q9M0A6"/>
<dbReference type="FunCoup" id="Q9M0A6">
    <property type="interactions" value="63"/>
</dbReference>
<dbReference type="STRING" id="3702.Q9M0A6"/>
<dbReference type="MEROPS" id="C26.A05"/>
<dbReference type="PaxDb" id="3702-AT4G30540.1"/>
<dbReference type="EnsemblPlants" id="AT4G30540.1">
    <property type="protein sequence ID" value="AT4G30540.1"/>
    <property type="gene ID" value="AT4G30540"/>
</dbReference>
<dbReference type="GeneID" id="829177"/>
<dbReference type="Gramene" id="AT4G30540.1">
    <property type="protein sequence ID" value="AT4G30540.1"/>
    <property type="gene ID" value="AT4G30540"/>
</dbReference>
<dbReference type="KEGG" id="ath:AT4G30540"/>
<dbReference type="Araport" id="AT4G30540"/>
<dbReference type="TAIR" id="AT4G30540"/>
<dbReference type="eggNOG" id="KOG3179">
    <property type="taxonomic scope" value="Eukaryota"/>
</dbReference>
<dbReference type="HOGENOM" id="CLU_054974_0_1_1"/>
<dbReference type="InParanoid" id="Q9M0A6"/>
<dbReference type="OMA" id="HEYSGFV"/>
<dbReference type="OrthoDB" id="92161at2759"/>
<dbReference type="PhylomeDB" id="Q9M0A6"/>
<dbReference type="PRO" id="PR:Q9M0A6"/>
<dbReference type="Proteomes" id="UP000006548">
    <property type="component" value="Chromosome 4"/>
</dbReference>
<dbReference type="ExpressionAtlas" id="Q9M0A6">
    <property type="expression patterns" value="baseline and differential"/>
</dbReference>
<dbReference type="GO" id="GO:0005829">
    <property type="term" value="C:cytosol"/>
    <property type="evidence" value="ECO:0007669"/>
    <property type="project" value="UniProtKB-SubCell"/>
</dbReference>
<dbReference type="GO" id="GO:0008233">
    <property type="term" value="F:peptidase activity"/>
    <property type="evidence" value="ECO:0007669"/>
    <property type="project" value="UniProtKB-KW"/>
</dbReference>
<dbReference type="GO" id="GO:0006508">
    <property type="term" value="P:proteolysis"/>
    <property type="evidence" value="ECO:0007669"/>
    <property type="project" value="UniProtKB-KW"/>
</dbReference>
<dbReference type="CDD" id="cd01741">
    <property type="entry name" value="GATase1_1"/>
    <property type="match status" value="1"/>
</dbReference>
<dbReference type="FunFam" id="3.40.50.880:FF:000040">
    <property type="entry name" value="Gamma-glutamyl peptidase 5"/>
    <property type="match status" value="1"/>
</dbReference>
<dbReference type="Gene3D" id="3.40.50.880">
    <property type="match status" value="1"/>
</dbReference>
<dbReference type="InterPro" id="IPR044992">
    <property type="entry name" value="ChyE-like"/>
</dbReference>
<dbReference type="InterPro" id="IPR029062">
    <property type="entry name" value="Class_I_gatase-like"/>
</dbReference>
<dbReference type="InterPro" id="IPR017926">
    <property type="entry name" value="GATASE"/>
</dbReference>
<dbReference type="PANTHER" id="PTHR42695:SF9">
    <property type="entry name" value="GAMMA-GLUTAMYL PEPTIDASE 2-RELATED"/>
    <property type="match status" value="1"/>
</dbReference>
<dbReference type="PANTHER" id="PTHR42695">
    <property type="entry name" value="GLUTAMINE AMIDOTRANSFERASE YLR126C-RELATED"/>
    <property type="match status" value="1"/>
</dbReference>
<dbReference type="Pfam" id="PF00117">
    <property type="entry name" value="GATase"/>
    <property type="match status" value="1"/>
</dbReference>
<dbReference type="SUPFAM" id="SSF52317">
    <property type="entry name" value="Class I glutamine amidotransferase-like"/>
    <property type="match status" value="1"/>
</dbReference>
<dbReference type="PROSITE" id="PS51273">
    <property type="entry name" value="GATASE_TYPE_1"/>
    <property type="match status" value="1"/>
</dbReference>
<gene>
    <name evidence="3" type="primary">GGP2</name>
    <name evidence="4" type="ordered locus">At4g30540</name>
</gene>